<dbReference type="EMBL" id="AE006914">
    <property type="protein sequence ID" value="AAL03024.1"/>
    <property type="molecule type" value="Genomic_DNA"/>
</dbReference>
<dbReference type="PIR" id="F97760">
    <property type="entry name" value="F97760"/>
</dbReference>
<dbReference type="RefSeq" id="WP_010977126.1">
    <property type="nucleotide sequence ID" value="NC_003103.1"/>
</dbReference>
<dbReference type="GeneID" id="927612"/>
<dbReference type="KEGG" id="rco:RC0486"/>
<dbReference type="PATRIC" id="fig|272944.4.peg.557"/>
<dbReference type="HOGENOM" id="CLU_668825_0_0_5"/>
<dbReference type="Proteomes" id="UP000000816">
    <property type="component" value="Chromosome"/>
</dbReference>
<dbReference type="GO" id="GO:0016020">
    <property type="term" value="C:membrane"/>
    <property type="evidence" value="ECO:0007669"/>
    <property type="project" value="UniProtKB-SubCell"/>
</dbReference>
<dbReference type="InterPro" id="IPR007016">
    <property type="entry name" value="O-antigen_ligase-rel_domated"/>
</dbReference>
<dbReference type="InterPro" id="IPR051533">
    <property type="entry name" value="WaaL-like"/>
</dbReference>
<dbReference type="PANTHER" id="PTHR37422:SF13">
    <property type="entry name" value="LIPOPOLYSACCHARIDE BIOSYNTHESIS PROTEIN PA4999-RELATED"/>
    <property type="match status" value="1"/>
</dbReference>
<dbReference type="PANTHER" id="PTHR37422">
    <property type="entry name" value="TEICHURONIC ACID BIOSYNTHESIS PROTEIN TUAE"/>
    <property type="match status" value="1"/>
</dbReference>
<dbReference type="Pfam" id="PF04932">
    <property type="entry name" value="Wzy_C"/>
    <property type="match status" value="1"/>
</dbReference>
<organism>
    <name type="scientific">Rickettsia conorii (strain ATCC VR-613 / Malish 7)</name>
    <dbReference type="NCBI Taxonomy" id="272944"/>
    <lineage>
        <taxon>Bacteria</taxon>
        <taxon>Pseudomonadati</taxon>
        <taxon>Pseudomonadota</taxon>
        <taxon>Alphaproteobacteria</taxon>
        <taxon>Rickettsiales</taxon>
        <taxon>Rickettsiaceae</taxon>
        <taxon>Rickettsieae</taxon>
        <taxon>Rickettsia</taxon>
        <taxon>spotted fever group</taxon>
    </lineage>
</organism>
<feature type="chain" id="PRO_0000280990" description="Putative polysaccharide ligase RC0486">
    <location>
        <begin position="1"/>
        <end position="411"/>
    </location>
</feature>
<feature type="transmembrane region" description="Helical" evidence="1">
    <location>
        <begin position="15"/>
        <end position="35"/>
    </location>
</feature>
<feature type="transmembrane region" description="Helical" evidence="1">
    <location>
        <begin position="78"/>
        <end position="98"/>
    </location>
</feature>
<feature type="transmembrane region" description="Helical" evidence="1">
    <location>
        <begin position="101"/>
        <end position="121"/>
    </location>
</feature>
<feature type="transmembrane region" description="Helical" evidence="1">
    <location>
        <begin position="133"/>
        <end position="153"/>
    </location>
</feature>
<feature type="transmembrane region" description="Helical" evidence="1">
    <location>
        <begin position="166"/>
        <end position="186"/>
    </location>
</feature>
<feature type="transmembrane region" description="Helical" evidence="1">
    <location>
        <begin position="207"/>
        <end position="227"/>
    </location>
</feature>
<feature type="transmembrane region" description="Helical" evidence="1">
    <location>
        <begin position="233"/>
        <end position="253"/>
    </location>
</feature>
<feature type="transmembrane region" description="Helical" evidence="1">
    <location>
        <begin position="328"/>
        <end position="348"/>
    </location>
</feature>
<feature type="transmembrane region" description="Helical" evidence="1">
    <location>
        <begin position="361"/>
        <end position="381"/>
    </location>
</feature>
<feature type="transmembrane region" description="Helical" evidence="1">
    <location>
        <begin position="383"/>
        <end position="403"/>
    </location>
</feature>
<proteinExistence type="inferred from homology"/>
<keyword id="KW-0472">Membrane</keyword>
<keyword id="KW-0812">Transmembrane</keyword>
<keyword id="KW-1133">Transmembrane helix</keyword>
<reference key="1">
    <citation type="journal article" date="2001" name="Science">
        <title>Mechanisms of evolution in Rickettsia conorii and R. prowazekii.</title>
        <authorList>
            <person name="Ogata H."/>
            <person name="Audic S."/>
            <person name="Renesto-Audiffren P."/>
            <person name="Fournier P.-E."/>
            <person name="Barbe V."/>
            <person name="Samson D."/>
            <person name="Roux V."/>
            <person name="Cossart P."/>
            <person name="Weissenbach J."/>
            <person name="Claverie J.-M."/>
            <person name="Raoult D."/>
        </authorList>
    </citation>
    <scope>NUCLEOTIDE SEQUENCE [LARGE SCALE GENOMIC DNA]</scope>
    <source>
        <strain>ATCC VR-613 / Malish 7</strain>
    </source>
</reference>
<evidence type="ECO:0000255" key="1"/>
<evidence type="ECO:0000305" key="2"/>
<gene>
    <name type="ordered locus">RC0486</name>
</gene>
<name>Y486_RICCN</name>
<comment type="subcellular location">
    <subcellularLocation>
        <location evidence="2">Membrane</location>
        <topology evidence="2">Multi-pass membrane protein</topology>
    </subcellularLocation>
</comment>
<comment type="similarity">
    <text evidence="2">Belongs to the O-antigen ligase family.</text>
</comment>
<accession>Q92ID4</accession>
<protein>
    <recommendedName>
        <fullName>Putative polysaccharide ligase RC0486</fullName>
    </recommendedName>
</protein>
<sequence>MQYLISSLIFLIPSLGMLAGLSAAATVTIFLLISFLRGINRHCERLQGVWQSSNNVIPWLDHGIQKIQKDWIPLQAHGITMLFTAWCFISCLFAIHLINSLATFTQVFILLFLGFAVSNSAPFQNRLQLKKALIFGILTAILLFFIEYSSNGFLTRIFKTSFALYMLDRGCALLSITAWVAIIILLSNGKKRHTLMLYILVLYLLSISDSLASFLGFGIGGVIFILTRFMKPIFFKLIAISLITGSLLFPVIAKQIEPQDLSEKYLATQPSAAHRLFIWHFVANKIIEKPILGYGLASSKYIKAGDSEMIDYNGEKWHPLPLHPHNNILQITLELGIIGLILFLCLVYKYLKQISNLENKNFKAISYACFINYYIIGMISYNIWQIWWISSGIWVLVLMKLLVKPDIVIDN</sequence>